<feature type="chain" id="PRO_0000451230" description="Eremophilane O-acetyltransferase prx11">
    <location>
        <begin position="1"/>
        <end position="471"/>
    </location>
</feature>
<keyword id="KW-0012">Acyltransferase</keyword>
<keyword id="KW-1185">Reference proteome</keyword>
<keyword id="KW-0808">Transferase</keyword>
<organism>
    <name type="scientific">Penicillium rubens (strain ATCC 28089 / DSM 1075 / NRRL 1951 / Wisconsin 54-1255)</name>
    <name type="common">Penicillium chrysogenum</name>
    <dbReference type="NCBI Taxonomy" id="500485"/>
    <lineage>
        <taxon>Eukaryota</taxon>
        <taxon>Fungi</taxon>
        <taxon>Dikarya</taxon>
        <taxon>Ascomycota</taxon>
        <taxon>Pezizomycotina</taxon>
        <taxon>Eurotiomycetes</taxon>
        <taxon>Eurotiomycetidae</taxon>
        <taxon>Eurotiales</taxon>
        <taxon>Aspergillaceae</taxon>
        <taxon>Penicillium</taxon>
        <taxon>Penicillium chrysogenum species complex</taxon>
    </lineage>
</organism>
<sequence length="471" mass="53011">MYELQQHRRFSALDEMLPAFYYCYLLCFPVSSDNRAGTSELLQTSLSSLAEERPYLTGTVRRDMESSVRKGHLILDIPNPFEDLRIVFNDLRGPKSQWKETYQDLKDTGMPPHKLDANLLAPLTAGIGETRKVMSVQANFIHGGLLIAFCFHHNFVDAYGAGRIIARFSEHCNGTVDLKNSADPEGDGTGSRGIADLLDVELLKKQYKFEDLESDPNLWRLNCLEFRGVNDFRWPDFIPALLPVRKPPVISSMFSFSSDALAEIKAMAQPSQSGAWVSTNDALVAFLWRHTMRARFPSSITESEPPNRKSNVVVALDGRKDLSISPTYIGNCLFHCFTDLPINMVGSESTHLGDIAIRVRQTITAARNETLLKAVVGLAATHPDCQAIKYANDNLGPDLYVTSWIDLPFYKLEWGPLGKAEFFRIPDRQFESLCCILPPKDGVVQLITSMEEDHSKRLRSDAEFTRFATHR</sequence>
<name>PRX11_PENRW</name>
<accession>B6H069</accession>
<reference key="1">
    <citation type="journal article" date="2008" name="Nat. Biotechnol.">
        <title>Genome sequencing and analysis of the filamentous fungus Penicillium chrysogenum.</title>
        <authorList>
            <person name="van den Berg M.A."/>
            <person name="Albang R."/>
            <person name="Albermann K."/>
            <person name="Badger J.H."/>
            <person name="Daran J.-M."/>
            <person name="Driessen A.J.M."/>
            <person name="Garcia-Estrada C."/>
            <person name="Fedorova N.D."/>
            <person name="Harris D.M."/>
            <person name="Heijne W.H.M."/>
            <person name="Joardar V.S."/>
            <person name="Kiel J.A.K.W."/>
            <person name="Kovalchuk A."/>
            <person name="Martin J.F."/>
            <person name="Nierman W.C."/>
            <person name="Nijland J.G."/>
            <person name="Pronk J.T."/>
            <person name="Roubos J.A."/>
            <person name="van der Klei I.J."/>
            <person name="van Peij N.N.M.E."/>
            <person name="Veenhuis M."/>
            <person name="von Doehren H."/>
            <person name="Wagner C."/>
            <person name="Wortman J.R."/>
            <person name="Bovenberg R.A.L."/>
        </authorList>
    </citation>
    <scope>NUCLEOTIDE SEQUENCE [LARGE SCALE GENOMIC DNA]</scope>
    <source>
        <strain>ATCC 28089 / DSM 1075 / NRRL 1951 / Wisconsin 54-1255</strain>
    </source>
</reference>
<reference key="2">
    <citation type="journal article" date="2014" name="Fungal Genet. Biol.">
        <title>Molecular characterization of the PR-toxin gene cluster in Penicillium roqueforti and Penicillium chrysogenum: cross talk of secondary metabolite pathways.</title>
        <authorList>
            <person name="Hidalgo P.I."/>
            <person name="Ullan R.V."/>
            <person name="Albillos S.M."/>
            <person name="Montero O."/>
            <person name="Fernandez-Bodega M.A."/>
            <person name="Garcia-Estrada C."/>
            <person name="Fernandez-Aguado M."/>
            <person name="Martin J.F."/>
        </authorList>
    </citation>
    <scope>FUNCTION</scope>
    <scope>INDUCTION</scope>
    <scope>PATHWAY</scope>
</reference>
<protein>
    <recommendedName>
        <fullName evidence="6">Eremophilane O-acetyltransferase prx11</fullName>
        <ecNumber evidence="8">2.3.1.-</ecNumber>
    </recommendedName>
    <alternativeName>
        <fullName evidence="6">PR-toxin biosynthesis cluster protein 11</fullName>
    </alternativeName>
</protein>
<evidence type="ECO:0000250" key="1">
    <source>
        <dbReference type="UniProtKB" id="Q4WZ64"/>
    </source>
</evidence>
<evidence type="ECO:0000250" key="2">
    <source>
        <dbReference type="UniProtKB" id="W6Q3Z9"/>
    </source>
</evidence>
<evidence type="ECO:0000250" key="3">
    <source>
        <dbReference type="UniProtKB" id="W6QB15"/>
    </source>
</evidence>
<evidence type="ECO:0000250" key="4">
    <source>
        <dbReference type="UniProtKB" id="W6QP10"/>
    </source>
</evidence>
<evidence type="ECO:0000269" key="5">
    <source>
    </source>
</evidence>
<evidence type="ECO:0000303" key="6">
    <source>
    </source>
</evidence>
<evidence type="ECO:0000305" key="7"/>
<evidence type="ECO:0000305" key="8">
    <source>
    </source>
</evidence>
<dbReference type="EC" id="2.3.1.-" evidence="8"/>
<dbReference type="EMBL" id="AM920427">
    <property type="protein sequence ID" value="CAP80264.1"/>
    <property type="molecule type" value="Genomic_DNA"/>
</dbReference>
<dbReference type="RefSeq" id="XP_002557479.1">
    <property type="nucleotide sequence ID" value="XM_002557433.1"/>
</dbReference>
<dbReference type="SMR" id="B6H069"/>
<dbReference type="GeneID" id="8313023"/>
<dbReference type="KEGG" id="pcs:N7525_001914"/>
<dbReference type="VEuPathDB" id="FungiDB:PCH_Pc12g06370"/>
<dbReference type="eggNOG" id="ENOG502RS2N">
    <property type="taxonomic scope" value="Eukaryota"/>
</dbReference>
<dbReference type="HOGENOM" id="CLU_026450_4_0_1"/>
<dbReference type="OMA" id="RMPRGQF"/>
<dbReference type="OrthoDB" id="1862401at2759"/>
<dbReference type="BioCyc" id="PCHR:PC12G06370-MONOMER"/>
<dbReference type="Proteomes" id="UP000000724">
    <property type="component" value="Contig Pc00c12"/>
</dbReference>
<dbReference type="GO" id="GO:0016747">
    <property type="term" value="F:acyltransferase activity, transferring groups other than amino-acyl groups"/>
    <property type="evidence" value="ECO:0007669"/>
    <property type="project" value="TreeGrafter"/>
</dbReference>
<dbReference type="Gene3D" id="3.30.559.10">
    <property type="entry name" value="Chloramphenicol acetyltransferase-like domain"/>
    <property type="match status" value="2"/>
</dbReference>
<dbReference type="InterPro" id="IPR023213">
    <property type="entry name" value="CAT-like_dom_sf"/>
</dbReference>
<dbReference type="InterPro" id="IPR050317">
    <property type="entry name" value="Plant_Fungal_Acyltransferase"/>
</dbReference>
<dbReference type="InterPro" id="IPR054710">
    <property type="entry name" value="Tri101-like_N"/>
</dbReference>
<dbReference type="PANTHER" id="PTHR31642:SF270">
    <property type="entry name" value="O-ACYLTRANSFERASE AUSQ"/>
    <property type="match status" value="1"/>
</dbReference>
<dbReference type="PANTHER" id="PTHR31642">
    <property type="entry name" value="TRICHOTHECENE 3-O-ACETYLTRANSFERASE"/>
    <property type="match status" value="1"/>
</dbReference>
<dbReference type="Pfam" id="PF02458">
    <property type="entry name" value="Transferase"/>
    <property type="match status" value="1"/>
</dbReference>
<dbReference type="Pfam" id="PF22664">
    <property type="entry name" value="TRI-like_N"/>
    <property type="match status" value="1"/>
</dbReference>
<proteinExistence type="evidence at transcript level"/>
<gene>
    <name evidence="6" type="primary">prx11</name>
    <name type="ORF">Pc12g06370</name>
    <name type="ORF">PCH_Pc12g06370</name>
</gene>
<comment type="function">
    <text evidence="2 3 4 5">O-acetyltransferase; part of the gene cluster that mediates the biosynthesis of PR-toxin, a bicyclic sesquiterpene belonging to the eremophilane class and acting as a mycotoxin (PubMed:24239699). The first step of the pathway is catalyzed by the aristolochene synthase which performs the cyclization of trans,trans-farnesyl diphosphate (FPP) to the bicyclic sesquiterpene aristolochene (PubMed:24239699). Following the formation of aristolochene, the non-oxygenated aristolochene is converted to the trioxygenated intermediate eremofortin B, via 7-epi-neopetasone (PubMed:24239699). This conversion appears to involve three enzymes, a hydroxysterol oxidase-like enzyme, the quinone-oxidase prx3 that forms the quinone-type-structure in the bicyclic nucleus of aristolochene with the C8-oxo group and the C-3 hydroxyl group, and the P450 monooxygenase prx9 that introduces the epoxide at the double bond between carbons 1 and 2 (By similarity) (PubMed:24239699). No monoxy or dioxy-intermediates have been reported to be released to the broth, so these three early oxidative reactions may be coupled together (PubMed:24239699). Eremofortin B is further oxidized by another P450 monooxygenase, that introduces a second epoxide between carbons 7 and 11 prior to acetylation to eremofortin A by the acetyltransferase prx11 (By similarity). The second epoxidation may be performed by a second P450 monooxygenase (PubMed:24239699). After the acetylation step, eremofortin A is converted to eremofortin C and then to PR-toxin (PubMed:24239699). First the conversion of eremofortin A to eremofortin C proceeds by oxidation of the side chain of the molecule at C-12 and is catalyzed by the short-chain oxidoreductase prx1 (PubMed:24239699). The cytochrome P450 monooxygenase prx8 also plays a role in this step (By similarity). The primary alcohol formed at C-12 is finally oxidized by the short-chain alcohol dehydrogenase prx4 that forms PR-toxin (PubMed:24239699).</text>
</comment>
<comment type="pathway">
    <text evidence="8">Sesquiterpene biosynthesis.</text>
</comment>
<comment type="subunit">
    <text evidence="1">Monomer.</text>
</comment>
<comment type="induction">
    <text evidence="5">Expression and the subsequent production of PR-toxin take place under static culture conditions (oxygen limited), whereas no expression of the PR-toxin genes occurs under the strongly aerated conditions required for optimal penicillin production (PubMed:24239699). There is a negative control of the transcription of the PR-toxin genes by the penicillin biosynthesis gene product(s), or by a regulatory peptide encoded by a small ORF inside the penicillin gene cluster (PubMed:24239699).</text>
</comment>
<comment type="similarity">
    <text evidence="7">Belongs to the fumigaclavine B O-acetyltransferase family.</text>
</comment>